<protein>
    <recommendedName>
        <fullName evidence="1">Polyribonucleotide nucleotidyltransferase</fullName>
        <ecNumber evidence="1">2.7.7.8</ecNumber>
    </recommendedName>
    <alternativeName>
        <fullName evidence="1">Polynucleotide phosphorylase</fullName>
        <shortName evidence="1">PNPase</shortName>
    </alternativeName>
</protein>
<organism>
    <name type="scientific">Methylobacillus flagellatus (strain ATCC 51484 / DSM 6875 / VKM B-1610 / KT)</name>
    <dbReference type="NCBI Taxonomy" id="265072"/>
    <lineage>
        <taxon>Bacteria</taxon>
        <taxon>Pseudomonadati</taxon>
        <taxon>Pseudomonadota</taxon>
        <taxon>Betaproteobacteria</taxon>
        <taxon>Nitrosomonadales</taxon>
        <taxon>Methylophilaceae</taxon>
        <taxon>Methylobacillus</taxon>
    </lineage>
</organism>
<sequence>MTAIKKTITYGQHELTLETGEIARQADGAVMVSYGDTVVLVSVVGKREVKEGQDFFPLTVDYQEKTYAAGKIPGGFFKREGRPSEKETLTSRLIDRPLRPLFPEAFYNEVQVVATVMSSDPEIDADIPAIIGASAALAISGIPFYGPIGAARVGYINGEYVLNPTASQLKETALDLVVAATESAVLMVESEAKELPEDVMLGSVVYGHEQMQIVISAINELAAEVGKEPWDWAPPEPNTELIAKVEALAGADINEAYKIKSKSARSSKLDEIRSRVLGELITETTSTSEANEIKSIFHNLEAKVVRSQILNGEPRIDGRDTRTVRPISIRTGVLPRTHGSALFTRGETQALVVATLGTGRDEQIIDALQGEYADRFMLHYNMPPYATGETGRVGTPKRREIGHGRLAKRALLAVLPSQEEFGYTIRVVSEITESNGSSSMASVCGGCLSLLDAGVPLKAHVAGIAMGLIKEGNRVAVLTDILGDEDHLGDMDFKVAGTESGITALQMDIKITGITAEIMRVALSQAKEGRLHILGLMKEAVGEQPQELSEFAPRIITMKINPEKIRDVIGKGGAVIRALTEETGTTIDIEEDGTIKIGCTSAEAGEEAKKRIEAITAEVEVGQVYDGTVLKLLDFGAIVSLLPGKDGLLHISQIAHQRVNAVADFLKEGQVVKVKVLEVDDKGRVRLSAKALIEAPSAEAPEEPAVAATGADQQ</sequence>
<evidence type="ECO:0000255" key="1">
    <source>
        <dbReference type="HAMAP-Rule" id="MF_01595"/>
    </source>
</evidence>
<reference key="1">
    <citation type="submission" date="2006-03" db="EMBL/GenBank/DDBJ databases">
        <title>Complete sequence of Methylobacillus flagellatus KT.</title>
        <authorList>
            <consortium name="US DOE Joint Genome Institute"/>
            <person name="Copeland A."/>
            <person name="Lucas S."/>
            <person name="Lapidus A."/>
            <person name="Barry K."/>
            <person name="Detter J.C."/>
            <person name="Glavina del Rio T."/>
            <person name="Hammon N."/>
            <person name="Israni S."/>
            <person name="Dalin E."/>
            <person name="Tice H."/>
            <person name="Pitluck S."/>
            <person name="Brettin T."/>
            <person name="Bruce D."/>
            <person name="Han C."/>
            <person name="Tapia R."/>
            <person name="Saunders E."/>
            <person name="Gilna P."/>
            <person name="Schmutz J."/>
            <person name="Larimer F."/>
            <person name="Land M."/>
            <person name="Kyrpides N."/>
            <person name="Anderson I."/>
            <person name="Richardson P."/>
        </authorList>
    </citation>
    <scope>NUCLEOTIDE SEQUENCE [LARGE SCALE GENOMIC DNA]</scope>
    <source>
        <strain>ATCC 51484 / DSM 6875 / VKM B-1610 / KT</strain>
    </source>
</reference>
<accession>Q1GXD2</accession>
<proteinExistence type="inferred from homology"/>
<name>PNP_METFK</name>
<dbReference type="EC" id="2.7.7.8" evidence="1"/>
<dbReference type="EMBL" id="CP000284">
    <property type="protein sequence ID" value="ABE48342.1"/>
    <property type="molecule type" value="Genomic_DNA"/>
</dbReference>
<dbReference type="RefSeq" id="WP_011478439.1">
    <property type="nucleotide sequence ID" value="NC_007947.1"/>
</dbReference>
<dbReference type="SMR" id="Q1GXD2"/>
<dbReference type="STRING" id="265072.Mfla_0071"/>
<dbReference type="KEGG" id="mfa:Mfla_0071"/>
<dbReference type="eggNOG" id="COG1185">
    <property type="taxonomic scope" value="Bacteria"/>
</dbReference>
<dbReference type="HOGENOM" id="CLU_004217_2_2_4"/>
<dbReference type="OrthoDB" id="9804305at2"/>
<dbReference type="Proteomes" id="UP000002440">
    <property type="component" value="Chromosome"/>
</dbReference>
<dbReference type="GO" id="GO:0005829">
    <property type="term" value="C:cytosol"/>
    <property type="evidence" value="ECO:0007669"/>
    <property type="project" value="TreeGrafter"/>
</dbReference>
<dbReference type="GO" id="GO:0000175">
    <property type="term" value="F:3'-5'-RNA exonuclease activity"/>
    <property type="evidence" value="ECO:0007669"/>
    <property type="project" value="TreeGrafter"/>
</dbReference>
<dbReference type="GO" id="GO:0000287">
    <property type="term" value="F:magnesium ion binding"/>
    <property type="evidence" value="ECO:0007669"/>
    <property type="project" value="UniProtKB-UniRule"/>
</dbReference>
<dbReference type="GO" id="GO:0004654">
    <property type="term" value="F:polyribonucleotide nucleotidyltransferase activity"/>
    <property type="evidence" value="ECO:0007669"/>
    <property type="project" value="UniProtKB-UniRule"/>
</dbReference>
<dbReference type="GO" id="GO:0003723">
    <property type="term" value="F:RNA binding"/>
    <property type="evidence" value="ECO:0007669"/>
    <property type="project" value="UniProtKB-UniRule"/>
</dbReference>
<dbReference type="GO" id="GO:0006402">
    <property type="term" value="P:mRNA catabolic process"/>
    <property type="evidence" value="ECO:0007669"/>
    <property type="project" value="UniProtKB-UniRule"/>
</dbReference>
<dbReference type="GO" id="GO:0006396">
    <property type="term" value="P:RNA processing"/>
    <property type="evidence" value="ECO:0007669"/>
    <property type="project" value="InterPro"/>
</dbReference>
<dbReference type="CDD" id="cd02393">
    <property type="entry name" value="KH-I_PNPase"/>
    <property type="match status" value="1"/>
</dbReference>
<dbReference type="CDD" id="cd11363">
    <property type="entry name" value="RNase_PH_PNPase_1"/>
    <property type="match status" value="1"/>
</dbReference>
<dbReference type="CDD" id="cd11364">
    <property type="entry name" value="RNase_PH_PNPase_2"/>
    <property type="match status" value="1"/>
</dbReference>
<dbReference type="CDD" id="cd04472">
    <property type="entry name" value="S1_PNPase"/>
    <property type="match status" value="1"/>
</dbReference>
<dbReference type="FunFam" id="2.40.50.140:FF:000023">
    <property type="entry name" value="Polyribonucleotide nucleotidyltransferase"/>
    <property type="match status" value="1"/>
</dbReference>
<dbReference type="FunFam" id="3.30.1370.10:FF:000001">
    <property type="entry name" value="Polyribonucleotide nucleotidyltransferase"/>
    <property type="match status" value="1"/>
</dbReference>
<dbReference type="FunFam" id="3.30.230.70:FF:000001">
    <property type="entry name" value="Polyribonucleotide nucleotidyltransferase"/>
    <property type="match status" value="1"/>
</dbReference>
<dbReference type="FunFam" id="3.30.230.70:FF:000002">
    <property type="entry name" value="Polyribonucleotide nucleotidyltransferase"/>
    <property type="match status" value="1"/>
</dbReference>
<dbReference type="Gene3D" id="3.30.230.70">
    <property type="entry name" value="GHMP Kinase, N-terminal domain"/>
    <property type="match status" value="2"/>
</dbReference>
<dbReference type="Gene3D" id="3.30.1370.10">
    <property type="entry name" value="K Homology domain, type 1"/>
    <property type="match status" value="1"/>
</dbReference>
<dbReference type="Gene3D" id="2.40.50.140">
    <property type="entry name" value="Nucleic acid-binding proteins"/>
    <property type="match status" value="1"/>
</dbReference>
<dbReference type="HAMAP" id="MF_01595">
    <property type="entry name" value="PNPase"/>
    <property type="match status" value="1"/>
</dbReference>
<dbReference type="InterPro" id="IPR001247">
    <property type="entry name" value="ExoRNase_PH_dom1"/>
</dbReference>
<dbReference type="InterPro" id="IPR015847">
    <property type="entry name" value="ExoRNase_PH_dom2"/>
</dbReference>
<dbReference type="InterPro" id="IPR036345">
    <property type="entry name" value="ExoRNase_PH_dom2_sf"/>
</dbReference>
<dbReference type="InterPro" id="IPR004087">
    <property type="entry name" value="KH_dom"/>
</dbReference>
<dbReference type="InterPro" id="IPR004088">
    <property type="entry name" value="KH_dom_type_1"/>
</dbReference>
<dbReference type="InterPro" id="IPR036612">
    <property type="entry name" value="KH_dom_type_1_sf"/>
</dbReference>
<dbReference type="InterPro" id="IPR012340">
    <property type="entry name" value="NA-bd_OB-fold"/>
</dbReference>
<dbReference type="InterPro" id="IPR012162">
    <property type="entry name" value="PNPase"/>
</dbReference>
<dbReference type="InterPro" id="IPR027408">
    <property type="entry name" value="PNPase/RNase_PH_dom_sf"/>
</dbReference>
<dbReference type="InterPro" id="IPR015848">
    <property type="entry name" value="PNPase_PH_RNA-bd_bac/org-type"/>
</dbReference>
<dbReference type="InterPro" id="IPR020568">
    <property type="entry name" value="Ribosomal_Su5_D2-typ_SF"/>
</dbReference>
<dbReference type="InterPro" id="IPR003029">
    <property type="entry name" value="S1_domain"/>
</dbReference>
<dbReference type="NCBIfam" id="TIGR03591">
    <property type="entry name" value="polynuc_phos"/>
    <property type="match status" value="1"/>
</dbReference>
<dbReference type="NCBIfam" id="NF008805">
    <property type="entry name" value="PRK11824.1"/>
    <property type="match status" value="1"/>
</dbReference>
<dbReference type="PANTHER" id="PTHR11252">
    <property type="entry name" value="POLYRIBONUCLEOTIDE NUCLEOTIDYLTRANSFERASE"/>
    <property type="match status" value="1"/>
</dbReference>
<dbReference type="PANTHER" id="PTHR11252:SF0">
    <property type="entry name" value="POLYRIBONUCLEOTIDE NUCLEOTIDYLTRANSFERASE 1, MITOCHONDRIAL"/>
    <property type="match status" value="1"/>
</dbReference>
<dbReference type="Pfam" id="PF00013">
    <property type="entry name" value="KH_1"/>
    <property type="match status" value="1"/>
</dbReference>
<dbReference type="Pfam" id="PF03726">
    <property type="entry name" value="PNPase"/>
    <property type="match status" value="1"/>
</dbReference>
<dbReference type="Pfam" id="PF01138">
    <property type="entry name" value="RNase_PH"/>
    <property type="match status" value="2"/>
</dbReference>
<dbReference type="Pfam" id="PF03725">
    <property type="entry name" value="RNase_PH_C"/>
    <property type="match status" value="2"/>
</dbReference>
<dbReference type="Pfam" id="PF00575">
    <property type="entry name" value="S1"/>
    <property type="match status" value="1"/>
</dbReference>
<dbReference type="PIRSF" id="PIRSF005499">
    <property type="entry name" value="PNPase"/>
    <property type="match status" value="1"/>
</dbReference>
<dbReference type="SMART" id="SM00322">
    <property type="entry name" value="KH"/>
    <property type="match status" value="1"/>
</dbReference>
<dbReference type="SMART" id="SM00316">
    <property type="entry name" value="S1"/>
    <property type="match status" value="1"/>
</dbReference>
<dbReference type="SUPFAM" id="SSF54791">
    <property type="entry name" value="Eukaryotic type KH-domain (KH-domain type I)"/>
    <property type="match status" value="1"/>
</dbReference>
<dbReference type="SUPFAM" id="SSF50249">
    <property type="entry name" value="Nucleic acid-binding proteins"/>
    <property type="match status" value="1"/>
</dbReference>
<dbReference type="SUPFAM" id="SSF55666">
    <property type="entry name" value="Ribonuclease PH domain 2-like"/>
    <property type="match status" value="2"/>
</dbReference>
<dbReference type="SUPFAM" id="SSF54211">
    <property type="entry name" value="Ribosomal protein S5 domain 2-like"/>
    <property type="match status" value="2"/>
</dbReference>
<dbReference type="PROSITE" id="PS50084">
    <property type="entry name" value="KH_TYPE_1"/>
    <property type="match status" value="1"/>
</dbReference>
<dbReference type="PROSITE" id="PS50126">
    <property type="entry name" value="S1"/>
    <property type="match status" value="1"/>
</dbReference>
<feature type="chain" id="PRO_0000329712" description="Polyribonucleotide nucleotidyltransferase">
    <location>
        <begin position="1"/>
        <end position="714"/>
    </location>
</feature>
<feature type="domain" description="KH" evidence="1">
    <location>
        <begin position="553"/>
        <end position="612"/>
    </location>
</feature>
<feature type="domain" description="S1 motif" evidence="1">
    <location>
        <begin position="622"/>
        <end position="690"/>
    </location>
</feature>
<feature type="binding site" evidence="1">
    <location>
        <position position="486"/>
    </location>
    <ligand>
        <name>Mg(2+)</name>
        <dbReference type="ChEBI" id="CHEBI:18420"/>
    </ligand>
</feature>
<feature type="binding site" evidence="1">
    <location>
        <position position="492"/>
    </location>
    <ligand>
        <name>Mg(2+)</name>
        <dbReference type="ChEBI" id="CHEBI:18420"/>
    </ligand>
</feature>
<comment type="function">
    <text evidence="1">Involved in mRNA degradation. Catalyzes the phosphorolysis of single-stranded polyribonucleotides processively in the 3'- to 5'-direction.</text>
</comment>
<comment type="catalytic activity">
    <reaction evidence="1">
        <text>RNA(n+1) + phosphate = RNA(n) + a ribonucleoside 5'-diphosphate</text>
        <dbReference type="Rhea" id="RHEA:22096"/>
        <dbReference type="Rhea" id="RHEA-COMP:14527"/>
        <dbReference type="Rhea" id="RHEA-COMP:17342"/>
        <dbReference type="ChEBI" id="CHEBI:43474"/>
        <dbReference type="ChEBI" id="CHEBI:57930"/>
        <dbReference type="ChEBI" id="CHEBI:140395"/>
        <dbReference type="EC" id="2.7.7.8"/>
    </reaction>
</comment>
<comment type="cofactor">
    <cofactor evidence="1">
        <name>Mg(2+)</name>
        <dbReference type="ChEBI" id="CHEBI:18420"/>
    </cofactor>
</comment>
<comment type="subcellular location">
    <subcellularLocation>
        <location evidence="1">Cytoplasm</location>
    </subcellularLocation>
</comment>
<comment type="similarity">
    <text evidence="1">Belongs to the polyribonucleotide nucleotidyltransferase family.</text>
</comment>
<keyword id="KW-0963">Cytoplasm</keyword>
<keyword id="KW-0460">Magnesium</keyword>
<keyword id="KW-0479">Metal-binding</keyword>
<keyword id="KW-0548">Nucleotidyltransferase</keyword>
<keyword id="KW-1185">Reference proteome</keyword>
<keyword id="KW-0694">RNA-binding</keyword>
<keyword id="KW-0808">Transferase</keyword>
<gene>
    <name evidence="1" type="primary">pnp</name>
    <name type="ordered locus">Mfla_0071</name>
</gene>